<accession>O83204</accession>
<evidence type="ECO:0000255" key="1"/>
<name>Y174_TREPA</name>
<feature type="signal peptide" evidence="1">
    <location>
        <begin position="1"/>
        <end position="35"/>
    </location>
</feature>
<feature type="chain" id="PRO_0000014241" description="Uncharacterized protein TP_0174">
    <location>
        <begin position="36"/>
        <end position="280"/>
    </location>
</feature>
<sequence length="280" mass="31763">MQGQVLKKVLKKYVHIGMCTLFLHAILLFPCVAQAVLCQIFLSALIRNTSRMPHTMCSFPSQVTAIFDICACPCAVRSFYLNGNSLIFTGGGHPFSVYASRFSSLPFLETSSGTVAGAAYSVASFLGFTRITSVGTDFSYTNGKPYARGTYLSKQFEQKILRISPLETQFCNLMFRTPTRQDNTQGGITYSNEILDQYKRNFDQITPGARPWHAADFRAFPYKQFINFFHAQLRSKHAAALLAMLPFITWYKTKRTPQAPIFRILELVLEDVLRYTRYNE</sequence>
<protein>
    <recommendedName>
        <fullName>Uncharacterized protein TP_0174</fullName>
    </recommendedName>
</protein>
<dbReference type="EMBL" id="AE000520">
    <property type="protein sequence ID" value="AAC65164.1"/>
    <property type="molecule type" value="Genomic_DNA"/>
</dbReference>
<dbReference type="PIR" id="C71358">
    <property type="entry name" value="C71358"/>
</dbReference>
<dbReference type="IntAct" id="O83204">
    <property type="interactions" value="1"/>
</dbReference>
<dbReference type="STRING" id="243276.TP_0174"/>
<dbReference type="EnsemblBacteria" id="AAC65164">
    <property type="protein sequence ID" value="AAC65164"/>
    <property type="gene ID" value="TP_0174"/>
</dbReference>
<dbReference type="KEGG" id="tpa:TP_0174"/>
<dbReference type="HOGENOM" id="CLU_993727_0_0_12"/>
<dbReference type="Proteomes" id="UP000000811">
    <property type="component" value="Chromosome"/>
</dbReference>
<gene>
    <name type="ordered locus">TP_0174</name>
</gene>
<keyword id="KW-1185">Reference proteome</keyword>
<keyword id="KW-0732">Signal</keyword>
<proteinExistence type="inferred from homology"/>
<reference key="1">
    <citation type="journal article" date="1998" name="Science">
        <title>Complete genome sequence of Treponema pallidum, the syphilis spirochete.</title>
        <authorList>
            <person name="Fraser C.M."/>
            <person name="Norris S.J."/>
            <person name="Weinstock G.M."/>
            <person name="White O."/>
            <person name="Sutton G.G."/>
            <person name="Dodson R.J."/>
            <person name="Gwinn M.L."/>
            <person name="Hickey E.K."/>
            <person name="Clayton R.A."/>
            <person name="Ketchum K.A."/>
            <person name="Sodergren E."/>
            <person name="Hardham J.M."/>
            <person name="McLeod M.P."/>
            <person name="Salzberg S.L."/>
            <person name="Peterson J.D."/>
            <person name="Khalak H.G."/>
            <person name="Richardson D.L."/>
            <person name="Howell J.K."/>
            <person name="Chidambaram M."/>
            <person name="Utterback T.R."/>
            <person name="McDonald L.A."/>
            <person name="Artiach P."/>
            <person name="Bowman C."/>
            <person name="Cotton M.D."/>
            <person name="Fujii C."/>
            <person name="Garland S.A."/>
            <person name="Hatch B."/>
            <person name="Horst K."/>
            <person name="Roberts K.M."/>
            <person name="Sandusky M."/>
            <person name="Weidman J.F."/>
            <person name="Smith H.O."/>
            <person name="Venter J.C."/>
        </authorList>
    </citation>
    <scope>NUCLEOTIDE SEQUENCE [LARGE SCALE GENOMIC DNA]</scope>
    <source>
        <strain>Nichols</strain>
    </source>
</reference>
<organism>
    <name type="scientific">Treponema pallidum (strain Nichols)</name>
    <dbReference type="NCBI Taxonomy" id="243276"/>
    <lineage>
        <taxon>Bacteria</taxon>
        <taxon>Pseudomonadati</taxon>
        <taxon>Spirochaetota</taxon>
        <taxon>Spirochaetia</taxon>
        <taxon>Spirochaetales</taxon>
        <taxon>Treponemataceae</taxon>
        <taxon>Treponema</taxon>
    </lineage>
</organism>